<name>FABA_YERP3</name>
<keyword id="KW-0963">Cytoplasm</keyword>
<keyword id="KW-0275">Fatty acid biosynthesis</keyword>
<keyword id="KW-0276">Fatty acid metabolism</keyword>
<keyword id="KW-0413">Isomerase</keyword>
<keyword id="KW-0444">Lipid biosynthesis</keyword>
<keyword id="KW-0443">Lipid metabolism</keyword>
<keyword id="KW-0456">Lyase</keyword>
<comment type="function">
    <text evidence="1">Necessary for the introduction of cis unsaturation into fatty acids. Catalyzes the dehydration of (3R)-3-hydroxydecanoyl-ACP to E-(2)-decenoyl-ACP and then its isomerization to Z-(3)-decenoyl-ACP. Can catalyze the dehydratase reaction for beta-hydroxyacyl-ACPs with saturated chain lengths up to 16:0, being most active on intermediate chain length.</text>
</comment>
<comment type="catalytic activity">
    <reaction evidence="1">
        <text>a (3R)-hydroxyacyl-[ACP] = a (2E)-enoyl-[ACP] + H2O</text>
        <dbReference type="Rhea" id="RHEA:13097"/>
        <dbReference type="Rhea" id="RHEA-COMP:9925"/>
        <dbReference type="Rhea" id="RHEA-COMP:9945"/>
        <dbReference type="ChEBI" id="CHEBI:15377"/>
        <dbReference type="ChEBI" id="CHEBI:78784"/>
        <dbReference type="ChEBI" id="CHEBI:78827"/>
        <dbReference type="EC" id="4.2.1.59"/>
    </reaction>
</comment>
<comment type="catalytic activity">
    <reaction evidence="1">
        <text>(3R)-hydroxydecanoyl-[ACP] = (2E)-decenoyl-[ACP] + H2O</text>
        <dbReference type="Rhea" id="RHEA:41860"/>
        <dbReference type="Rhea" id="RHEA-COMP:9638"/>
        <dbReference type="Rhea" id="RHEA-COMP:9639"/>
        <dbReference type="ChEBI" id="CHEBI:15377"/>
        <dbReference type="ChEBI" id="CHEBI:78466"/>
        <dbReference type="ChEBI" id="CHEBI:78467"/>
    </reaction>
</comment>
<comment type="catalytic activity">
    <reaction evidence="1">
        <text>(2E)-decenoyl-[ACP] = (3Z)-decenoyl-[ACP]</text>
        <dbReference type="Rhea" id="RHEA:23568"/>
        <dbReference type="Rhea" id="RHEA-COMP:9639"/>
        <dbReference type="Rhea" id="RHEA-COMP:9927"/>
        <dbReference type="ChEBI" id="CHEBI:78467"/>
        <dbReference type="ChEBI" id="CHEBI:78798"/>
        <dbReference type="EC" id="5.3.3.14"/>
    </reaction>
</comment>
<comment type="pathway">
    <text evidence="1">Lipid metabolism; fatty acid biosynthesis.</text>
</comment>
<comment type="subunit">
    <text evidence="1">Homodimer.</text>
</comment>
<comment type="subcellular location">
    <subcellularLocation>
        <location evidence="1">Cytoplasm</location>
    </subcellularLocation>
</comment>
<comment type="similarity">
    <text evidence="1">Belongs to the thioester dehydratase family. FabA subfamily.</text>
</comment>
<protein>
    <recommendedName>
        <fullName evidence="1">3-hydroxydecanoyl-[acyl-carrier-protein] dehydratase</fullName>
        <ecNumber evidence="1">4.2.1.59</ecNumber>
    </recommendedName>
    <alternativeName>
        <fullName evidence="1">3-hydroxyacyl-[acyl-carrier-protein] dehydratase FabA</fullName>
    </alternativeName>
    <alternativeName>
        <fullName evidence="1">Beta-hydroxydecanoyl thioester dehydrase</fullName>
    </alternativeName>
    <alternativeName>
        <fullName evidence="1">Trans-2-decenoyl-[acyl-carrier-protein] isomerase</fullName>
        <ecNumber evidence="1">5.3.3.14</ecNumber>
    </alternativeName>
</protein>
<reference key="1">
    <citation type="journal article" date="2007" name="PLoS Genet.">
        <title>The complete genome sequence of Yersinia pseudotuberculosis IP31758, the causative agent of Far East scarlet-like fever.</title>
        <authorList>
            <person name="Eppinger M."/>
            <person name="Rosovitz M.J."/>
            <person name="Fricke W.F."/>
            <person name="Rasko D.A."/>
            <person name="Kokorina G."/>
            <person name="Fayolle C."/>
            <person name="Lindler L.E."/>
            <person name="Carniel E."/>
            <person name="Ravel J."/>
        </authorList>
    </citation>
    <scope>NUCLEOTIDE SEQUENCE [LARGE SCALE GENOMIC DNA]</scope>
    <source>
        <strain>IP 31758</strain>
    </source>
</reference>
<evidence type="ECO:0000255" key="1">
    <source>
        <dbReference type="HAMAP-Rule" id="MF_00405"/>
    </source>
</evidence>
<sequence length="172" mass="18810">MVDKRESYTKEDLEASGRGELFGAGGPPLPAGNMLMMDRIVKMIEDGGSHNKGYVEAELDINPDLWFFGCHFIGDPVMPGCLGLDAMWQLVGFYLGWLGGEGKGRALGVGEVKFTGQVLPDAKKVTYRINFKRVIMRKLIMGVADGEVLVDGKVIYTATDLKVGLFKDTNAF</sequence>
<gene>
    <name evidence="1" type="primary">fabA</name>
    <name type="ordered locus">YpsIP31758_2546</name>
</gene>
<proteinExistence type="inferred from homology"/>
<feature type="chain" id="PRO_1000060825" description="3-hydroxydecanoyl-[acyl-carrier-protein] dehydratase">
    <location>
        <begin position="1"/>
        <end position="172"/>
    </location>
</feature>
<feature type="active site" evidence="1">
    <location>
        <position position="71"/>
    </location>
</feature>
<dbReference type="EC" id="4.2.1.59" evidence="1"/>
<dbReference type="EC" id="5.3.3.14" evidence="1"/>
<dbReference type="EMBL" id="CP000720">
    <property type="protein sequence ID" value="ABS49728.1"/>
    <property type="molecule type" value="Genomic_DNA"/>
</dbReference>
<dbReference type="RefSeq" id="WP_002220006.1">
    <property type="nucleotide sequence ID" value="NC_009708.1"/>
</dbReference>
<dbReference type="SMR" id="A7FJT3"/>
<dbReference type="GeneID" id="57977132"/>
<dbReference type="KEGG" id="ypi:YpsIP31758_2546"/>
<dbReference type="HOGENOM" id="CLU_097925_0_0_6"/>
<dbReference type="UniPathway" id="UPA00094"/>
<dbReference type="Proteomes" id="UP000002412">
    <property type="component" value="Chromosome"/>
</dbReference>
<dbReference type="GO" id="GO:0005737">
    <property type="term" value="C:cytoplasm"/>
    <property type="evidence" value="ECO:0007669"/>
    <property type="project" value="UniProtKB-SubCell"/>
</dbReference>
<dbReference type="GO" id="GO:0019171">
    <property type="term" value="F:(3R)-hydroxyacyl-[acyl-carrier-protein] dehydratase activity"/>
    <property type="evidence" value="ECO:0007669"/>
    <property type="project" value="UniProtKB-UniRule"/>
</dbReference>
<dbReference type="GO" id="GO:0034017">
    <property type="term" value="F:trans-2-decenoyl-acyl-carrier-protein isomerase activity"/>
    <property type="evidence" value="ECO:0007669"/>
    <property type="project" value="UniProtKB-UniRule"/>
</dbReference>
<dbReference type="GO" id="GO:0006636">
    <property type="term" value="P:unsaturated fatty acid biosynthetic process"/>
    <property type="evidence" value="ECO:0007669"/>
    <property type="project" value="UniProtKB-UniRule"/>
</dbReference>
<dbReference type="CDD" id="cd01287">
    <property type="entry name" value="FabA"/>
    <property type="match status" value="1"/>
</dbReference>
<dbReference type="FunFam" id="3.10.129.10:FF:000003">
    <property type="entry name" value="3-hydroxydecanoyl-[acyl-carrier-protein] dehydratase"/>
    <property type="match status" value="1"/>
</dbReference>
<dbReference type="Gene3D" id="3.10.129.10">
    <property type="entry name" value="Hotdog Thioesterase"/>
    <property type="match status" value="1"/>
</dbReference>
<dbReference type="HAMAP" id="MF_00405">
    <property type="entry name" value="FabA"/>
    <property type="match status" value="1"/>
</dbReference>
<dbReference type="InterPro" id="IPR010083">
    <property type="entry name" value="FabA"/>
</dbReference>
<dbReference type="InterPro" id="IPR013114">
    <property type="entry name" value="FabA_FabZ"/>
</dbReference>
<dbReference type="InterPro" id="IPR029069">
    <property type="entry name" value="HotDog_dom_sf"/>
</dbReference>
<dbReference type="NCBIfam" id="TIGR01749">
    <property type="entry name" value="fabA"/>
    <property type="match status" value="1"/>
</dbReference>
<dbReference type="NCBIfam" id="NF003509">
    <property type="entry name" value="PRK05174.1"/>
    <property type="match status" value="1"/>
</dbReference>
<dbReference type="PANTHER" id="PTHR30272">
    <property type="entry name" value="3-HYDROXYACYL-[ACYL-CARRIER-PROTEIN] DEHYDRATASE"/>
    <property type="match status" value="1"/>
</dbReference>
<dbReference type="PANTHER" id="PTHR30272:SF8">
    <property type="entry name" value="3-HYDROXYDECANOYL-[ACYL-CARRIER-PROTEIN] DEHYDRATASE"/>
    <property type="match status" value="1"/>
</dbReference>
<dbReference type="Pfam" id="PF07977">
    <property type="entry name" value="FabA"/>
    <property type="match status" value="1"/>
</dbReference>
<dbReference type="SUPFAM" id="SSF54637">
    <property type="entry name" value="Thioesterase/thiol ester dehydrase-isomerase"/>
    <property type="match status" value="1"/>
</dbReference>
<organism>
    <name type="scientific">Yersinia pseudotuberculosis serotype O:1b (strain IP 31758)</name>
    <dbReference type="NCBI Taxonomy" id="349747"/>
    <lineage>
        <taxon>Bacteria</taxon>
        <taxon>Pseudomonadati</taxon>
        <taxon>Pseudomonadota</taxon>
        <taxon>Gammaproteobacteria</taxon>
        <taxon>Enterobacterales</taxon>
        <taxon>Yersiniaceae</taxon>
        <taxon>Yersinia</taxon>
    </lineage>
</organism>
<accession>A7FJT3</accession>